<proteinExistence type="inferred from homology"/>
<name>MAD1_EREGS</name>
<protein>
    <recommendedName>
        <fullName>Spindle assembly checkpoint component MAD1</fullName>
    </recommendedName>
    <alternativeName>
        <fullName>Mitotic arrest deficient protein 1</fullName>
    </alternativeName>
</protein>
<reference key="1">
    <citation type="journal article" date="2004" name="Science">
        <title>The Ashbya gossypii genome as a tool for mapping the ancient Saccharomyces cerevisiae genome.</title>
        <authorList>
            <person name="Dietrich F.S."/>
            <person name="Voegeli S."/>
            <person name="Brachat S."/>
            <person name="Lerch A."/>
            <person name="Gates K."/>
            <person name="Steiner S."/>
            <person name="Mohr C."/>
            <person name="Poehlmann R."/>
            <person name="Luedi P."/>
            <person name="Choi S."/>
            <person name="Wing R.A."/>
            <person name="Flavier A."/>
            <person name="Gaffney T.D."/>
            <person name="Philippsen P."/>
        </authorList>
    </citation>
    <scope>NUCLEOTIDE SEQUENCE [LARGE SCALE GENOMIC DNA]</scope>
    <source>
        <strain>ATCC 10895 / CBS 109.51 / FGSC 9923 / NRRL Y-1056</strain>
    </source>
</reference>
<reference key="2">
    <citation type="journal article" date="2013" name="G3 (Bethesda)">
        <title>Genomes of Ashbya fungi isolated from insects reveal four mating-type loci, numerous translocations, lack of transposons, and distinct gene duplications.</title>
        <authorList>
            <person name="Dietrich F.S."/>
            <person name="Voegeli S."/>
            <person name="Kuo S."/>
            <person name="Philippsen P."/>
        </authorList>
    </citation>
    <scope>GENOME REANNOTATION</scope>
    <scope>SEQUENCE REVISION TO 136</scope>
    <source>
        <strain>ATCC 10895 / CBS 109.51 / FGSC 9923 / NRRL Y-1056</strain>
    </source>
</reference>
<organism>
    <name type="scientific">Eremothecium gossypii (strain ATCC 10895 / CBS 109.51 / FGSC 9923 / NRRL Y-1056)</name>
    <name type="common">Yeast</name>
    <name type="synonym">Ashbya gossypii</name>
    <dbReference type="NCBI Taxonomy" id="284811"/>
    <lineage>
        <taxon>Eukaryota</taxon>
        <taxon>Fungi</taxon>
        <taxon>Dikarya</taxon>
        <taxon>Ascomycota</taxon>
        <taxon>Saccharomycotina</taxon>
        <taxon>Saccharomycetes</taxon>
        <taxon>Saccharomycetales</taxon>
        <taxon>Saccharomycetaceae</taxon>
        <taxon>Eremothecium</taxon>
    </lineage>
</organism>
<feature type="chain" id="PRO_0000213791" description="Spindle assembly checkpoint component MAD1">
    <location>
        <begin position="1"/>
        <end position="659"/>
    </location>
</feature>
<feature type="region of interest" description="Disordered" evidence="3">
    <location>
        <begin position="1"/>
        <end position="24"/>
    </location>
</feature>
<feature type="coiled-coil region" evidence="2">
    <location>
        <begin position="23"/>
        <end position="531"/>
    </location>
</feature>
<feature type="compositionally biased region" description="Polar residues" evidence="3">
    <location>
        <begin position="1"/>
        <end position="10"/>
    </location>
</feature>
<sequence>MSQTGDSSSFVEEPASPEARQRELERQVLGLEYRLRTEHSEAEMARLALERELAGMQGKYKQCMGELEAALADTRYLYEQNAALEARARAADEDAGGAAAAERAAAAEERARAAEARARELEEALQAARGEAAAAGRAAAGAAAGAAAAEQSGLLRKYEAEIERQMGELRALAERLAEREDEVAGLKAQRVLQAHRSYSAEEVEELGVLRRTLQEQLALSKELERANLEQANELKRLRQRSESQQFLQLENSKLRARLEKTDALRQQLDDLQLENVQLQEKLTKWEVYQADGSSPENVLHEMALAKQERLALVEQVGKLQLDLNNMKILNDELALERNQLLDLNKKYESSILNLKKLNYEIEQQKLLSFEECKLLRQQLDDLSEVDKDHTPDTRDRKKIQTLVDTYKNQTEDLTNELKKLNEQLLERSDLDGNPRKRRKASDDLAFNYSQRLNELQLRNKDLERRLANSDENASLLEEKLRKLQSLNEKKIRILQLRNNPLLKDQFVKQKQLTLLKQENLELAQQLDAQQGLEAVPRSVYERQQYDIQLLEDELFSINKRTTRLKEMFNRKSLEFIDAVNSLLGFKLEFQVGGKVKMIPCFKTDRYLIADLQTNTLKSNLDKVMPEWDAMLAEYVGKRQQLPCFLAKIMLLLAESSSSQ</sequence>
<comment type="function">
    <text>Central component of the spindle assembly checkpoint.</text>
</comment>
<comment type="subcellular location">
    <subcellularLocation>
        <location evidence="1">Nucleus</location>
    </subcellularLocation>
</comment>
<comment type="similarity">
    <text evidence="4">Belongs to the MAD1 family.</text>
</comment>
<gene>
    <name type="primary">MAD1</name>
    <name type="ordered locus">AFL065C</name>
</gene>
<accession>Q754Z1</accession>
<dbReference type="EMBL" id="AE016819">
    <property type="protein sequence ID" value="AAS53307.2"/>
    <property type="molecule type" value="Genomic_DNA"/>
</dbReference>
<dbReference type="RefSeq" id="NP_985483.2">
    <property type="nucleotide sequence ID" value="NM_210837.2"/>
</dbReference>
<dbReference type="SMR" id="Q754Z1"/>
<dbReference type="FunCoup" id="Q754Z1">
    <property type="interactions" value="361"/>
</dbReference>
<dbReference type="STRING" id="284811.Q754Z1"/>
<dbReference type="EnsemblFungi" id="AAS53307">
    <property type="protein sequence ID" value="AAS53307"/>
    <property type="gene ID" value="AGOS_AFL065C"/>
</dbReference>
<dbReference type="GeneID" id="4621713"/>
<dbReference type="KEGG" id="ago:AGOS_AFL065C"/>
<dbReference type="eggNOG" id="KOG4593">
    <property type="taxonomic scope" value="Eukaryota"/>
</dbReference>
<dbReference type="HOGENOM" id="CLU_026595_0_0_1"/>
<dbReference type="InParanoid" id="Q754Z1"/>
<dbReference type="OMA" id="YKLDFMP"/>
<dbReference type="OrthoDB" id="331602at2759"/>
<dbReference type="Proteomes" id="UP000000591">
    <property type="component" value="Chromosome VI"/>
</dbReference>
<dbReference type="GO" id="GO:0000776">
    <property type="term" value="C:kinetochore"/>
    <property type="evidence" value="ECO:0000318"/>
    <property type="project" value="GO_Central"/>
</dbReference>
<dbReference type="GO" id="GO:0072686">
    <property type="term" value="C:mitotic spindle"/>
    <property type="evidence" value="ECO:0000318"/>
    <property type="project" value="GO_Central"/>
</dbReference>
<dbReference type="GO" id="GO:0005635">
    <property type="term" value="C:nuclear envelope"/>
    <property type="evidence" value="ECO:0000318"/>
    <property type="project" value="GO_Central"/>
</dbReference>
<dbReference type="GO" id="GO:0090268">
    <property type="term" value="P:activation of mitotic cell cycle spindle assembly checkpoint"/>
    <property type="evidence" value="ECO:0007669"/>
    <property type="project" value="EnsemblFungi"/>
</dbReference>
<dbReference type="GO" id="GO:0051315">
    <property type="term" value="P:attachment of mitotic spindle microtubules to kinetochore"/>
    <property type="evidence" value="ECO:0000318"/>
    <property type="project" value="GO_Central"/>
</dbReference>
<dbReference type="GO" id="GO:0051301">
    <property type="term" value="P:cell division"/>
    <property type="evidence" value="ECO:0007669"/>
    <property type="project" value="UniProtKB-KW"/>
</dbReference>
<dbReference type="GO" id="GO:0044774">
    <property type="term" value="P:mitotic DNA integrity checkpoint signaling"/>
    <property type="evidence" value="ECO:0007669"/>
    <property type="project" value="EnsemblFungi"/>
</dbReference>
<dbReference type="GO" id="GO:0007094">
    <property type="term" value="P:mitotic spindle assembly checkpoint signaling"/>
    <property type="evidence" value="ECO:0000318"/>
    <property type="project" value="GO_Central"/>
</dbReference>
<dbReference type="GO" id="GO:1901925">
    <property type="term" value="P:negative regulation of protein import into nucleus during spindle assembly checkpoint"/>
    <property type="evidence" value="ECO:0007669"/>
    <property type="project" value="EnsemblFungi"/>
</dbReference>
<dbReference type="GO" id="GO:0006913">
    <property type="term" value="P:nucleocytoplasmic transport"/>
    <property type="evidence" value="ECO:0007669"/>
    <property type="project" value="EnsemblFungi"/>
</dbReference>
<dbReference type="InterPro" id="IPR008672">
    <property type="entry name" value="Mad1"/>
</dbReference>
<dbReference type="PANTHER" id="PTHR23168:SF0">
    <property type="entry name" value="MITOTIC SPINDLE ASSEMBLY CHECKPOINT PROTEIN MAD1"/>
    <property type="match status" value="1"/>
</dbReference>
<dbReference type="PANTHER" id="PTHR23168">
    <property type="entry name" value="MITOTIC SPINDLE ASSEMBLY CHECKPOINT PROTEIN MAD1 MITOTIC ARREST DEFICIENT-LIKE PROTEIN 1"/>
    <property type="match status" value="1"/>
</dbReference>
<dbReference type="Pfam" id="PF05557">
    <property type="entry name" value="MAD"/>
    <property type="match status" value="1"/>
</dbReference>
<keyword id="KW-0131">Cell cycle</keyword>
<keyword id="KW-0132">Cell division</keyword>
<keyword id="KW-0175">Coiled coil</keyword>
<keyword id="KW-0498">Mitosis</keyword>
<keyword id="KW-0539">Nucleus</keyword>
<keyword id="KW-1185">Reference proteome</keyword>
<evidence type="ECO:0000250" key="1"/>
<evidence type="ECO:0000255" key="2"/>
<evidence type="ECO:0000256" key="3">
    <source>
        <dbReference type="SAM" id="MobiDB-lite"/>
    </source>
</evidence>
<evidence type="ECO:0000305" key="4"/>